<name>AROB_SALTI</name>
<evidence type="ECO:0000255" key="1">
    <source>
        <dbReference type="HAMAP-Rule" id="MF_00110"/>
    </source>
</evidence>
<feature type="chain" id="PRO_0000140775" description="3-dehydroquinate synthase">
    <location>
        <begin position="1"/>
        <end position="362"/>
    </location>
</feature>
<feature type="binding site" evidence="1">
    <location>
        <begin position="71"/>
        <end position="76"/>
    </location>
    <ligand>
        <name>NAD(+)</name>
        <dbReference type="ChEBI" id="CHEBI:57540"/>
    </ligand>
</feature>
<feature type="binding site" evidence="1">
    <location>
        <begin position="105"/>
        <end position="109"/>
    </location>
    <ligand>
        <name>NAD(+)</name>
        <dbReference type="ChEBI" id="CHEBI:57540"/>
    </ligand>
</feature>
<feature type="binding site" evidence="1">
    <location>
        <begin position="129"/>
        <end position="130"/>
    </location>
    <ligand>
        <name>NAD(+)</name>
        <dbReference type="ChEBI" id="CHEBI:57540"/>
    </ligand>
</feature>
<feature type="binding site" evidence="1">
    <location>
        <position position="142"/>
    </location>
    <ligand>
        <name>NAD(+)</name>
        <dbReference type="ChEBI" id="CHEBI:57540"/>
    </ligand>
</feature>
<feature type="binding site" evidence="1">
    <location>
        <position position="151"/>
    </location>
    <ligand>
        <name>NAD(+)</name>
        <dbReference type="ChEBI" id="CHEBI:57540"/>
    </ligand>
</feature>
<feature type="binding site" evidence="1">
    <location>
        <begin position="169"/>
        <end position="172"/>
    </location>
    <ligand>
        <name>NAD(+)</name>
        <dbReference type="ChEBI" id="CHEBI:57540"/>
    </ligand>
</feature>
<feature type="binding site" evidence="1">
    <location>
        <position position="184"/>
    </location>
    <ligand>
        <name>Zn(2+)</name>
        <dbReference type="ChEBI" id="CHEBI:29105"/>
    </ligand>
</feature>
<feature type="binding site" evidence="1">
    <location>
        <position position="247"/>
    </location>
    <ligand>
        <name>Zn(2+)</name>
        <dbReference type="ChEBI" id="CHEBI:29105"/>
    </ligand>
</feature>
<feature type="binding site" evidence="1">
    <location>
        <position position="264"/>
    </location>
    <ligand>
        <name>Zn(2+)</name>
        <dbReference type="ChEBI" id="CHEBI:29105"/>
    </ligand>
</feature>
<organism>
    <name type="scientific">Salmonella typhi</name>
    <dbReference type="NCBI Taxonomy" id="90370"/>
    <lineage>
        <taxon>Bacteria</taxon>
        <taxon>Pseudomonadati</taxon>
        <taxon>Pseudomonadota</taxon>
        <taxon>Gammaproteobacteria</taxon>
        <taxon>Enterobacterales</taxon>
        <taxon>Enterobacteriaceae</taxon>
        <taxon>Salmonella</taxon>
    </lineage>
</organism>
<gene>
    <name evidence="1" type="primary">aroB</name>
    <name type="ordered locus">STY4310</name>
    <name type="ordered locus">t4020</name>
</gene>
<reference key="1">
    <citation type="journal article" date="2001" name="Nature">
        <title>Complete genome sequence of a multiple drug resistant Salmonella enterica serovar Typhi CT18.</title>
        <authorList>
            <person name="Parkhill J."/>
            <person name="Dougan G."/>
            <person name="James K.D."/>
            <person name="Thomson N.R."/>
            <person name="Pickard D."/>
            <person name="Wain J."/>
            <person name="Churcher C.M."/>
            <person name="Mungall K.L."/>
            <person name="Bentley S.D."/>
            <person name="Holden M.T.G."/>
            <person name="Sebaihia M."/>
            <person name="Baker S."/>
            <person name="Basham D."/>
            <person name="Brooks K."/>
            <person name="Chillingworth T."/>
            <person name="Connerton P."/>
            <person name="Cronin A."/>
            <person name="Davis P."/>
            <person name="Davies R.M."/>
            <person name="Dowd L."/>
            <person name="White N."/>
            <person name="Farrar J."/>
            <person name="Feltwell T."/>
            <person name="Hamlin N."/>
            <person name="Haque A."/>
            <person name="Hien T.T."/>
            <person name="Holroyd S."/>
            <person name="Jagels K."/>
            <person name="Krogh A."/>
            <person name="Larsen T.S."/>
            <person name="Leather S."/>
            <person name="Moule S."/>
            <person name="O'Gaora P."/>
            <person name="Parry C."/>
            <person name="Quail M.A."/>
            <person name="Rutherford K.M."/>
            <person name="Simmonds M."/>
            <person name="Skelton J."/>
            <person name="Stevens K."/>
            <person name="Whitehead S."/>
            <person name="Barrell B.G."/>
        </authorList>
    </citation>
    <scope>NUCLEOTIDE SEQUENCE [LARGE SCALE GENOMIC DNA]</scope>
    <source>
        <strain>CT18</strain>
    </source>
</reference>
<reference key="2">
    <citation type="journal article" date="2003" name="J. Bacteriol.">
        <title>Comparative genomics of Salmonella enterica serovar Typhi strains Ty2 and CT18.</title>
        <authorList>
            <person name="Deng W."/>
            <person name="Liou S.-R."/>
            <person name="Plunkett G. III"/>
            <person name="Mayhew G.F."/>
            <person name="Rose D.J."/>
            <person name="Burland V."/>
            <person name="Kodoyianni V."/>
            <person name="Schwartz D.C."/>
            <person name="Blattner F.R."/>
        </authorList>
    </citation>
    <scope>NUCLEOTIDE SEQUENCE [LARGE SCALE GENOMIC DNA]</scope>
    <source>
        <strain>ATCC 700931 / Ty2</strain>
    </source>
</reference>
<dbReference type="EC" id="4.2.3.4" evidence="1"/>
<dbReference type="EMBL" id="AL513382">
    <property type="protein sequence ID" value="CAD08128.1"/>
    <property type="molecule type" value="Genomic_DNA"/>
</dbReference>
<dbReference type="EMBL" id="AE014613">
    <property type="protein sequence ID" value="AAO71490.1"/>
    <property type="molecule type" value="Genomic_DNA"/>
</dbReference>
<dbReference type="RefSeq" id="NP_458418.1">
    <property type="nucleotide sequence ID" value="NC_003198.1"/>
</dbReference>
<dbReference type="RefSeq" id="WP_000439825.1">
    <property type="nucleotide sequence ID" value="NZ_WSUR01000001.1"/>
</dbReference>
<dbReference type="SMR" id="Q8Z205"/>
<dbReference type="STRING" id="220341.gene:17588141"/>
<dbReference type="KEGG" id="stt:t4020"/>
<dbReference type="KEGG" id="sty:STY4310"/>
<dbReference type="PATRIC" id="fig|220341.7.peg.4405"/>
<dbReference type="eggNOG" id="COG0337">
    <property type="taxonomic scope" value="Bacteria"/>
</dbReference>
<dbReference type="HOGENOM" id="CLU_001201_0_2_6"/>
<dbReference type="OMA" id="IAIGMRM"/>
<dbReference type="OrthoDB" id="9806583at2"/>
<dbReference type="UniPathway" id="UPA00053">
    <property type="reaction ID" value="UER00085"/>
</dbReference>
<dbReference type="Proteomes" id="UP000000541">
    <property type="component" value="Chromosome"/>
</dbReference>
<dbReference type="Proteomes" id="UP000002670">
    <property type="component" value="Chromosome"/>
</dbReference>
<dbReference type="GO" id="GO:0005737">
    <property type="term" value="C:cytoplasm"/>
    <property type="evidence" value="ECO:0007669"/>
    <property type="project" value="UniProtKB-SubCell"/>
</dbReference>
<dbReference type="GO" id="GO:0003856">
    <property type="term" value="F:3-dehydroquinate synthase activity"/>
    <property type="evidence" value="ECO:0007669"/>
    <property type="project" value="UniProtKB-UniRule"/>
</dbReference>
<dbReference type="GO" id="GO:0046872">
    <property type="term" value="F:metal ion binding"/>
    <property type="evidence" value="ECO:0007669"/>
    <property type="project" value="UniProtKB-KW"/>
</dbReference>
<dbReference type="GO" id="GO:0000166">
    <property type="term" value="F:nucleotide binding"/>
    <property type="evidence" value="ECO:0007669"/>
    <property type="project" value="UniProtKB-KW"/>
</dbReference>
<dbReference type="GO" id="GO:0008652">
    <property type="term" value="P:amino acid biosynthetic process"/>
    <property type="evidence" value="ECO:0007669"/>
    <property type="project" value="UniProtKB-KW"/>
</dbReference>
<dbReference type="GO" id="GO:0009073">
    <property type="term" value="P:aromatic amino acid family biosynthetic process"/>
    <property type="evidence" value="ECO:0007669"/>
    <property type="project" value="UniProtKB-KW"/>
</dbReference>
<dbReference type="GO" id="GO:0009423">
    <property type="term" value="P:chorismate biosynthetic process"/>
    <property type="evidence" value="ECO:0007669"/>
    <property type="project" value="UniProtKB-UniRule"/>
</dbReference>
<dbReference type="CDD" id="cd08195">
    <property type="entry name" value="DHQS"/>
    <property type="match status" value="1"/>
</dbReference>
<dbReference type="FunFam" id="1.20.1090.10:FF:000002">
    <property type="entry name" value="3-dehydroquinate synthase"/>
    <property type="match status" value="1"/>
</dbReference>
<dbReference type="FunFam" id="3.40.50.1970:FF:000001">
    <property type="entry name" value="3-dehydroquinate synthase"/>
    <property type="match status" value="1"/>
</dbReference>
<dbReference type="Gene3D" id="3.40.50.1970">
    <property type="match status" value="1"/>
</dbReference>
<dbReference type="Gene3D" id="1.20.1090.10">
    <property type="entry name" value="Dehydroquinate synthase-like - alpha domain"/>
    <property type="match status" value="1"/>
</dbReference>
<dbReference type="HAMAP" id="MF_00110">
    <property type="entry name" value="DHQ_synthase"/>
    <property type="match status" value="1"/>
</dbReference>
<dbReference type="InterPro" id="IPR050071">
    <property type="entry name" value="Dehydroquinate_synthase"/>
</dbReference>
<dbReference type="InterPro" id="IPR016037">
    <property type="entry name" value="DHQ_synth_AroB"/>
</dbReference>
<dbReference type="InterPro" id="IPR030963">
    <property type="entry name" value="DHQ_synth_fam"/>
</dbReference>
<dbReference type="InterPro" id="IPR030960">
    <property type="entry name" value="DHQS/DOIS_N"/>
</dbReference>
<dbReference type="InterPro" id="IPR056179">
    <property type="entry name" value="DHQS_C"/>
</dbReference>
<dbReference type="NCBIfam" id="TIGR01357">
    <property type="entry name" value="aroB"/>
    <property type="match status" value="1"/>
</dbReference>
<dbReference type="PANTHER" id="PTHR43622">
    <property type="entry name" value="3-DEHYDROQUINATE SYNTHASE"/>
    <property type="match status" value="1"/>
</dbReference>
<dbReference type="PANTHER" id="PTHR43622:SF7">
    <property type="entry name" value="3-DEHYDROQUINATE SYNTHASE, CHLOROPLASTIC"/>
    <property type="match status" value="1"/>
</dbReference>
<dbReference type="Pfam" id="PF01761">
    <property type="entry name" value="DHQ_synthase"/>
    <property type="match status" value="1"/>
</dbReference>
<dbReference type="Pfam" id="PF24621">
    <property type="entry name" value="DHQS_C"/>
    <property type="match status" value="1"/>
</dbReference>
<dbReference type="PIRSF" id="PIRSF001455">
    <property type="entry name" value="DHQ_synth"/>
    <property type="match status" value="1"/>
</dbReference>
<dbReference type="SUPFAM" id="SSF56796">
    <property type="entry name" value="Dehydroquinate synthase-like"/>
    <property type="match status" value="1"/>
</dbReference>
<sequence length="362" mass="38710">MERITVTLGERSYPITIAAGLFNEPASFLPLKSGDQVMLVTNETLAPLYLDKVRGVLERAGVNVDSVILPDGEQYKSLTVLDTVFTALLKKPHGRDTTLVALGGGVIGDLTGFAAASYQRGVRFIQVPTTLLSQVDSSVGGKTAVNHPLGKNMIGAFYQPASVVVDLDCLKTLPARELASGLAEVIKYGIILDADFFTWLEGNLDALLRLDGPAMAYCIRRCCELKAEVVAADEREAGLRALLNLGHTFGHAIEAEMGYGNWLHGEAVAAGIVMAARASERLGQFSSADTQRIIALLERAGLPVNGPCEMSAQDYLPHMLRDKKVLAGELRLVLPLTIGKSEVRGGVSHEVVLSAIADCQQA</sequence>
<keyword id="KW-0028">Amino-acid biosynthesis</keyword>
<keyword id="KW-0057">Aromatic amino acid biosynthesis</keyword>
<keyword id="KW-0170">Cobalt</keyword>
<keyword id="KW-0963">Cytoplasm</keyword>
<keyword id="KW-0456">Lyase</keyword>
<keyword id="KW-0479">Metal-binding</keyword>
<keyword id="KW-0520">NAD</keyword>
<keyword id="KW-0547">Nucleotide-binding</keyword>
<keyword id="KW-0862">Zinc</keyword>
<protein>
    <recommendedName>
        <fullName evidence="1">3-dehydroquinate synthase</fullName>
        <shortName evidence="1">DHQS</shortName>
        <ecNumber evidence="1">4.2.3.4</ecNumber>
    </recommendedName>
</protein>
<proteinExistence type="inferred from homology"/>
<accession>Q8Z205</accession>
<comment type="function">
    <text evidence="1">Catalyzes the conversion of 3-deoxy-D-arabino-heptulosonate 7-phosphate (DAHP) to dehydroquinate (DHQ).</text>
</comment>
<comment type="catalytic activity">
    <reaction evidence="1">
        <text>7-phospho-2-dehydro-3-deoxy-D-arabino-heptonate = 3-dehydroquinate + phosphate</text>
        <dbReference type="Rhea" id="RHEA:21968"/>
        <dbReference type="ChEBI" id="CHEBI:32364"/>
        <dbReference type="ChEBI" id="CHEBI:43474"/>
        <dbReference type="ChEBI" id="CHEBI:58394"/>
        <dbReference type="EC" id="4.2.3.4"/>
    </reaction>
</comment>
<comment type="cofactor">
    <cofactor evidence="1">
        <name>NAD(+)</name>
        <dbReference type="ChEBI" id="CHEBI:57540"/>
    </cofactor>
</comment>
<comment type="cofactor">
    <cofactor evidence="1">
        <name>Co(2+)</name>
        <dbReference type="ChEBI" id="CHEBI:48828"/>
    </cofactor>
    <cofactor evidence="1">
        <name>Zn(2+)</name>
        <dbReference type="ChEBI" id="CHEBI:29105"/>
    </cofactor>
    <text evidence="1">Binds 1 divalent metal cation per subunit. Can use either Co(2+) or Zn(2+).</text>
</comment>
<comment type="pathway">
    <text evidence="1">Metabolic intermediate biosynthesis; chorismate biosynthesis; chorismate from D-erythrose 4-phosphate and phosphoenolpyruvate: step 2/7.</text>
</comment>
<comment type="subcellular location">
    <subcellularLocation>
        <location evidence="1">Cytoplasm</location>
    </subcellularLocation>
</comment>
<comment type="similarity">
    <text evidence="1">Belongs to the sugar phosphate cyclases superfamily. Dehydroquinate synthase family.</text>
</comment>